<name>PON1_RABIT</name>
<feature type="initiator methionine" description="Removed" evidence="4">
    <location>
        <position position="1"/>
    </location>
</feature>
<feature type="chain" id="PRO_0000223283" description="Serum paraoxonase/arylesterase 1">
    <location>
        <begin position="2"/>
        <end position="359"/>
    </location>
</feature>
<feature type="signal peptide" description="Not cleaved">
    <location>
        <begin position="2"/>
        <end status="unknown"/>
    </location>
</feature>
<feature type="active site" description="Proton acceptor" evidence="1">
    <location>
        <position position="115"/>
    </location>
</feature>
<feature type="binding site" evidence="1">
    <location>
        <position position="53"/>
    </location>
    <ligand>
        <name>Ca(2+)</name>
        <dbReference type="ChEBI" id="CHEBI:29108"/>
        <label>1</label>
        <note>catalytic</note>
    </ligand>
</feature>
<feature type="binding site" evidence="1">
    <location>
        <position position="54"/>
    </location>
    <ligand>
        <name>Ca(2+)</name>
        <dbReference type="ChEBI" id="CHEBI:29108"/>
        <label>2</label>
    </ligand>
</feature>
<feature type="binding site" evidence="1">
    <location>
        <position position="117"/>
    </location>
    <ligand>
        <name>Ca(2+)</name>
        <dbReference type="ChEBI" id="CHEBI:29108"/>
        <label>2</label>
    </ligand>
</feature>
<feature type="binding site" evidence="1">
    <location>
        <position position="168"/>
    </location>
    <ligand>
        <name>Ca(2+)</name>
        <dbReference type="ChEBI" id="CHEBI:29108"/>
        <label>1</label>
        <note>catalytic</note>
    </ligand>
</feature>
<feature type="binding site" evidence="1">
    <location>
        <position position="169"/>
    </location>
    <ligand>
        <name>Ca(2+)</name>
        <dbReference type="ChEBI" id="CHEBI:29108"/>
        <label>2</label>
    </ligand>
</feature>
<feature type="binding site" evidence="1">
    <location>
        <position position="224"/>
    </location>
    <ligand>
        <name>Ca(2+)</name>
        <dbReference type="ChEBI" id="CHEBI:29108"/>
        <label>1</label>
        <note>catalytic</note>
    </ligand>
</feature>
<feature type="binding site" evidence="1">
    <location>
        <position position="269"/>
    </location>
    <ligand>
        <name>Ca(2+)</name>
        <dbReference type="ChEBI" id="CHEBI:29108"/>
        <label>1</label>
        <note>catalytic</note>
    </ligand>
</feature>
<feature type="binding site" evidence="1">
    <location>
        <position position="270"/>
    </location>
    <ligand>
        <name>Ca(2+)</name>
        <dbReference type="ChEBI" id="CHEBI:29108"/>
        <label>1</label>
        <note>catalytic</note>
    </ligand>
</feature>
<feature type="glycosylation site" description="N-linked (GlcNAc...) asparagine" evidence="2">
    <location>
        <position position="50"/>
    </location>
</feature>
<feature type="glycosylation site" description="N-linked (GlcNAc...) asparagine" evidence="2">
    <location>
        <position position="253"/>
    </location>
</feature>
<feature type="glycosylation site" description="N-linked (GlcNAc...) asparagine" evidence="2">
    <location>
        <position position="270"/>
    </location>
</feature>
<feature type="glycosylation site" description="N-linked (GlcNAc...) asparagine" evidence="2">
    <location>
        <position position="324"/>
    </location>
</feature>
<feature type="disulfide bond" evidence="1">
    <location>
        <begin position="42"/>
        <end position="353"/>
    </location>
</feature>
<feature type="sequence variant" description="In allele A." evidence="3">
    <original>P</original>
    <variation>S</variation>
    <location>
        <position position="82"/>
    </location>
</feature>
<feature type="sequence variant" description="In allele A." evidence="3">
    <original>K</original>
    <variation>E</variation>
    <location>
        <position position="93"/>
    </location>
</feature>
<feature type="sequence variant" description="In allele A." evidence="3">
    <original>S</original>
    <variation>G</variation>
    <location>
        <position position="101"/>
    </location>
</feature>
<feature type="sequence conflict" description="In Ref. 3; AAK06398/AAK06399/AAK06400." evidence="5" ref="3">
    <original>A</original>
    <variation>S</variation>
    <location>
        <position position="67"/>
    </location>
</feature>
<feature type="sequence conflict" description="In Ref. 3; AAK06398." evidence="5" ref="3">
    <original>A</original>
    <variation>V</variation>
    <location>
        <position position="320"/>
    </location>
</feature>
<proteinExistence type="evidence at protein level"/>
<dbReference type="EC" id="3.1.1.2" evidence="4"/>
<dbReference type="EC" id="3.1.1.81" evidence="4"/>
<dbReference type="EC" id="3.1.8.1" evidence="4"/>
<dbReference type="EMBL" id="M63011">
    <property type="protein sequence ID" value="AAA31452.1"/>
    <property type="molecule type" value="mRNA"/>
</dbReference>
<dbReference type="EMBL" id="S64616">
    <property type="protein sequence ID" value="AAB27713.2"/>
    <property type="molecule type" value="mRNA"/>
</dbReference>
<dbReference type="EMBL" id="AF220941">
    <property type="protein sequence ID" value="AAK06398.1"/>
    <property type="status" value="ALT_SEQ"/>
    <property type="molecule type" value="mRNA"/>
</dbReference>
<dbReference type="EMBL" id="AF220942">
    <property type="protein sequence ID" value="AAK06399.1"/>
    <property type="molecule type" value="mRNA"/>
</dbReference>
<dbReference type="EMBL" id="AF220943">
    <property type="protein sequence ID" value="AAK06400.1"/>
    <property type="molecule type" value="mRNA"/>
</dbReference>
<dbReference type="PIR" id="B40354">
    <property type="entry name" value="B40354"/>
</dbReference>
<dbReference type="RefSeq" id="NP_001075766.1">
    <property type="nucleotide sequence ID" value="NM_001082297.2"/>
</dbReference>
<dbReference type="SMR" id="P27170"/>
<dbReference type="FunCoup" id="P27170">
    <property type="interactions" value="7"/>
</dbReference>
<dbReference type="STRING" id="9986.ENSOCUP00000046112"/>
<dbReference type="GlyCosmos" id="P27170">
    <property type="glycosylation" value="4 sites, No reported glycans"/>
</dbReference>
<dbReference type="PaxDb" id="9986-ENSOCUP00000004445"/>
<dbReference type="GeneID" id="100009133"/>
<dbReference type="KEGG" id="ocu:100009133"/>
<dbReference type="CTD" id="5444"/>
<dbReference type="eggNOG" id="ENOG502S3B5">
    <property type="taxonomic scope" value="Eukaryota"/>
</dbReference>
<dbReference type="InParanoid" id="P27170"/>
<dbReference type="OrthoDB" id="423498at2759"/>
<dbReference type="BRENDA" id="3.1.1.2">
    <property type="organism ID" value="1749"/>
</dbReference>
<dbReference type="BRENDA" id="3.1.8.1">
    <property type="organism ID" value="1749"/>
</dbReference>
<dbReference type="EvolutionaryTrace" id="P27170"/>
<dbReference type="Proteomes" id="UP000001811">
    <property type="component" value="Unplaced"/>
</dbReference>
<dbReference type="GO" id="GO:0034364">
    <property type="term" value="C:high-density lipoprotein particle"/>
    <property type="evidence" value="ECO:0007669"/>
    <property type="project" value="UniProtKB-KW"/>
</dbReference>
<dbReference type="GO" id="GO:0102007">
    <property type="term" value="F:acyl-L-homoserine-lactone lactonohydrolase activity"/>
    <property type="evidence" value="ECO:0007669"/>
    <property type="project" value="UniProtKB-EC"/>
</dbReference>
<dbReference type="GO" id="GO:0016209">
    <property type="term" value="F:antioxidant activity"/>
    <property type="evidence" value="ECO:0000314"/>
    <property type="project" value="UniProtKB"/>
</dbReference>
<dbReference type="GO" id="GO:0004063">
    <property type="term" value="F:aryldialkylphosphatase activity"/>
    <property type="evidence" value="ECO:0000250"/>
    <property type="project" value="UniProtKB"/>
</dbReference>
<dbReference type="GO" id="GO:0004064">
    <property type="term" value="F:arylesterase activity"/>
    <property type="evidence" value="ECO:0000314"/>
    <property type="project" value="UniProtKB"/>
</dbReference>
<dbReference type="GO" id="GO:0005509">
    <property type="term" value="F:calcium ion binding"/>
    <property type="evidence" value="ECO:0000250"/>
    <property type="project" value="UniProtKB"/>
</dbReference>
<dbReference type="GO" id="GO:0046683">
    <property type="term" value="P:response to organophosphorus"/>
    <property type="evidence" value="ECO:0000314"/>
    <property type="project" value="UniProtKB"/>
</dbReference>
<dbReference type="FunFam" id="2.120.10.30:FF:000023">
    <property type="entry name" value="Serum paraoxonase/arylesterase 2"/>
    <property type="match status" value="1"/>
</dbReference>
<dbReference type="Gene3D" id="2.120.10.30">
    <property type="entry name" value="TolB, C-terminal domain"/>
    <property type="match status" value="1"/>
</dbReference>
<dbReference type="InterPro" id="IPR011042">
    <property type="entry name" value="6-blade_b-propeller_TolB-like"/>
</dbReference>
<dbReference type="InterPro" id="IPR002640">
    <property type="entry name" value="Arylesterase"/>
</dbReference>
<dbReference type="InterPro" id="IPR008363">
    <property type="entry name" value="Paraoxonase1"/>
</dbReference>
<dbReference type="InterPro" id="IPR051288">
    <property type="entry name" value="Serum_paraoxonase/arylesterase"/>
</dbReference>
<dbReference type="PANTHER" id="PTHR11799">
    <property type="entry name" value="PARAOXONASE"/>
    <property type="match status" value="1"/>
</dbReference>
<dbReference type="PANTHER" id="PTHR11799:SF16">
    <property type="entry name" value="SERUM PARAOXONASE_ARYLESTERASE 1"/>
    <property type="match status" value="1"/>
</dbReference>
<dbReference type="Pfam" id="PF01731">
    <property type="entry name" value="Arylesterase"/>
    <property type="match status" value="1"/>
</dbReference>
<dbReference type="PRINTS" id="PR01785">
    <property type="entry name" value="PARAOXONASE"/>
</dbReference>
<dbReference type="PRINTS" id="PR01786">
    <property type="entry name" value="PARAOXONASE1"/>
</dbReference>
<dbReference type="SUPFAM" id="SSF63829">
    <property type="entry name" value="Calcium-dependent phosphotriesterase"/>
    <property type="match status" value="1"/>
</dbReference>
<evidence type="ECO:0000250" key="1">
    <source>
        <dbReference type="UniProtKB" id="P27169"/>
    </source>
</evidence>
<evidence type="ECO:0000255" key="2"/>
<evidence type="ECO:0000269" key="3">
    <source>
    </source>
</evidence>
<evidence type="ECO:0000269" key="4">
    <source>
    </source>
</evidence>
<evidence type="ECO:0000305" key="5"/>
<reference key="1">
    <citation type="journal article" date="1991" name="Biochemistry">
        <title>Characterization of cDNA clones encoding rabbit and human serum paraoxonase: the mature protein retains its signal sequence.</title>
        <authorList>
            <person name="Hassett C."/>
            <person name="Richter R.J."/>
            <person name="Humbert R."/>
            <person name="Chapline C."/>
            <person name="Crabb J.W."/>
            <person name="Omiecinski C.J."/>
            <person name="Furlong C.E."/>
        </authorList>
    </citation>
    <scope>NUCLEOTIDE SEQUENCE [MRNA]</scope>
    <scope>PARTIAL PROTEIN SEQUENCE</scope>
    <source>
        <tissue>Liver</tissue>
    </source>
</reference>
<reference key="2">
    <citation type="journal article" date="1993" name="Chem. Biol. Interact.">
        <title>Human and rabbit paraoxonases: purification, cloning, sequencing, mapping and role of polymorphism in organophosphate detoxification.</title>
        <authorList>
            <person name="Furlong C.E."/>
            <person name="Costa L.G."/>
            <person name="Hassett C."/>
            <person name="Richter R.J."/>
            <person name="Sundstrom J.A."/>
            <person name="Adler D.A."/>
            <person name="Disteche C.M."/>
            <person name="Omiecinski C.J."/>
            <person name="Chapline C."/>
            <person name="Crabb J.W."/>
        </authorList>
    </citation>
    <scope>NUCLEOTIDE SEQUENCE [MRNA]</scope>
    <scope>CHARACTERIZATION</scope>
    <source>
        <tissue>Liver</tissue>
    </source>
</reference>
<reference key="3">
    <citation type="journal article" date="2001" name="Pharmacogenetics">
        <title>Rabbits possess a serum paraoxonase polymorphism similar to the human Q192R.</title>
        <authorList>
            <person name="Watson C.E."/>
            <person name="Draganov D.I."/>
            <person name="Billecke S.S."/>
            <person name="Bisgaier C.L."/>
            <person name="La Du B.N."/>
        </authorList>
    </citation>
    <scope>NUCLEOTIDE SEQUENCE [MRNA]</scope>
    <scope>FUNCTION</scope>
    <scope>VARIANTS SER-82; GLU-93 AND GLY-101</scope>
    <source>
        <strain>New Zealand white</strain>
        <tissue>Liver</tissue>
    </source>
</reference>
<reference key="4">
    <citation type="journal article" date="1991" name="Biochemistry">
        <title>Purification of rabbit and human serum paraoxonase.</title>
        <authorList>
            <person name="Furlong C.E."/>
            <person name="Richter R.J."/>
            <person name="Chapline C."/>
            <person name="Crabb J.W."/>
        </authorList>
    </citation>
    <scope>PROTEIN SEQUENCE OF 2-21</scope>
    <scope>CATALYTIC ACTIVITY</scope>
</reference>
<protein>
    <recommendedName>
        <fullName>Serum paraoxonase/arylesterase 1</fullName>
        <shortName>PON 1</shortName>
        <ecNumber evidence="4">3.1.1.2</ecNumber>
        <ecNumber evidence="4">3.1.1.81</ecNumber>
        <ecNumber evidence="4">3.1.8.1</ecNumber>
    </recommendedName>
    <alternativeName>
        <fullName>Aromatic esterase 1</fullName>
        <shortName>A-esterase 1</shortName>
    </alternativeName>
    <alternativeName>
        <fullName>Serum aryldialkylphosphatase 1</fullName>
    </alternativeName>
</protein>
<keyword id="KW-0049">Antioxidant</keyword>
<keyword id="KW-0106">Calcium</keyword>
<keyword id="KW-0903">Direct protein sequencing</keyword>
<keyword id="KW-1015">Disulfide bond</keyword>
<keyword id="KW-0325">Glycoprotein</keyword>
<keyword id="KW-0345">HDL</keyword>
<keyword id="KW-0378">Hydrolase</keyword>
<keyword id="KW-0479">Metal-binding</keyword>
<keyword id="KW-1185">Reference proteome</keyword>
<keyword id="KW-0964">Secreted</keyword>
<keyword id="KW-0732">Signal</keyword>
<accession>P27170</accession>
<accession>Q9BGN1</accession>
<accession>Q9BGN2</accession>
<accession>Q9BGN3</accession>
<organism>
    <name type="scientific">Oryctolagus cuniculus</name>
    <name type="common">Rabbit</name>
    <dbReference type="NCBI Taxonomy" id="9986"/>
    <lineage>
        <taxon>Eukaryota</taxon>
        <taxon>Metazoa</taxon>
        <taxon>Chordata</taxon>
        <taxon>Craniata</taxon>
        <taxon>Vertebrata</taxon>
        <taxon>Euteleostomi</taxon>
        <taxon>Mammalia</taxon>
        <taxon>Eutheria</taxon>
        <taxon>Euarchontoglires</taxon>
        <taxon>Glires</taxon>
        <taxon>Lagomorpha</taxon>
        <taxon>Leporidae</taxon>
        <taxon>Oryctolagus</taxon>
    </lineage>
</organism>
<comment type="function">
    <text evidence="3">Hydrolyzes the toxic metabolites of a variety of organophosphorus insecticides. Capable of hydrolyzing a broad spectrum of organophosphate substrates and lactones, and a number of aromatic carboxylic acid esters. Mediates an enzymatic protection of low density lipoproteins against oxidative modification.</text>
</comment>
<comment type="catalytic activity">
    <reaction evidence="4">
        <text>a phenyl acetate + H2O = a phenol + acetate + H(+)</text>
        <dbReference type="Rhea" id="RHEA:17309"/>
        <dbReference type="ChEBI" id="CHEBI:15377"/>
        <dbReference type="ChEBI" id="CHEBI:15378"/>
        <dbReference type="ChEBI" id="CHEBI:30089"/>
        <dbReference type="ChEBI" id="CHEBI:33853"/>
        <dbReference type="ChEBI" id="CHEBI:140310"/>
        <dbReference type="EC" id="3.1.1.2"/>
    </reaction>
</comment>
<comment type="catalytic activity">
    <reaction evidence="4">
        <text>An aryl dialkyl phosphate + H2O = dialkyl phosphate + an aryl alcohol.</text>
        <dbReference type="EC" id="3.1.8.1"/>
    </reaction>
</comment>
<comment type="catalytic activity">
    <reaction evidence="4">
        <text>an N-acyl-L-homoserine lactone + H2O = an N-acyl-L-homoserine + H(+)</text>
        <dbReference type="Rhea" id="RHEA:22576"/>
        <dbReference type="ChEBI" id="CHEBI:15377"/>
        <dbReference type="ChEBI" id="CHEBI:15378"/>
        <dbReference type="ChEBI" id="CHEBI:55474"/>
        <dbReference type="ChEBI" id="CHEBI:58921"/>
        <dbReference type="EC" id="3.1.1.81"/>
    </reaction>
</comment>
<comment type="cofactor">
    <cofactor evidence="1">
        <name>Ca(2+)</name>
        <dbReference type="ChEBI" id="CHEBI:29108"/>
    </cofactor>
    <text evidence="1">Binds 2 calcium ions per subunit.</text>
</comment>
<comment type="subunit">
    <text evidence="1">Homodimer. Interacts with CLU.</text>
</comment>
<comment type="subcellular location">
    <subcellularLocation>
        <location>Secreted</location>
        <location>Extracellular space</location>
    </subcellularLocation>
</comment>
<comment type="tissue specificity">
    <text>Plasma. Associated with HDL.</text>
</comment>
<comment type="PTM">
    <text>Glycosylated.</text>
</comment>
<comment type="PTM">
    <text>The signal sequence is not cleaved.</text>
</comment>
<comment type="polymorphism">
    <text>There are two allelic forms, allozyme A and B, which differ in their substrate specificity. Both forms have similar arylesterase activity but allozyme B possesses greater paraoxonase activity. Allozyme A is better at protecting LDL from oxidation.</text>
</comment>
<comment type="miscellaneous">
    <text evidence="1">The preferential association of PON1 with HDL is mediated in part by its signal peptide, by binding phospholipids directly, rather than binding apo AI. The retained signal peptide may allow transfer of the protein between phospholipid surfaces.</text>
</comment>
<comment type="similarity">
    <text evidence="5">Belongs to the paraoxonase family.</text>
</comment>
<comment type="sequence caution" evidence="5">
    <conflict type="erroneous termination">
        <sequence resource="EMBL-CDS" id="AAK06398"/>
    </conflict>
    <text>Truncated C-terminus.</text>
</comment>
<sequence>MAKLTALTLLGLGLALFDGQKSSFQTRFNVHREVTPVELPNCNLVKGIDNGSEDLEILPNGLAFISAGLKYPGIMSFDPDKPGKILLMDLNEKDPVVLELSITGSTFDLSSFNPHGISTFTDEDNIVYLMVVNHPDSKSTVELFKFQEKEKSLLHLKTIRHKLLPSVNDIVAVGPEHFYATNDHYFIDPYLKSWEMHLGLAWSFVTYYSPNDVRVVAEGFDFANGINISPDGKYVYIAELLAHKIHVYEKHANWTLTPLKSLDFNTLVDNISVDPVTGDLWVGCHPNGMRIFYYDPKNPPASEVLRIQDILSKEPKVTVAYAENGTVLQGSTVAAVYKGKMLVGTVFHKALYCELSQAN</sequence>
<gene>
    <name type="primary">PON1</name>
    <name type="synonym">PON</name>
</gene>